<accession>Q9HCM3</accession>
<accession>B6HY55</accession>
<accession>B6HY56</accession>
<accession>B6HY58</accession>
<accession>B6HY60</accession>
<accession>B6HY61</accession>
<accession>B6HY62</accession>
<accession>B6HY63</accession>
<accession>B6HY64</accession>
<accession>B6HY65</accession>
<accession>B6HY66</accession>
<accession>Q5BJD6</accession>
<accession>Q8IY15</accession>
<accession>Q9H0M3</accession>
<feature type="chain" id="PRO_0000342405" description="UPF0606 protein KIAA1549">
    <location>
        <begin position="1"/>
        <end position="1950"/>
    </location>
</feature>
<feature type="transmembrane region" description="Helical" evidence="2">
    <location>
        <begin position="998"/>
        <end position="1018"/>
    </location>
</feature>
<feature type="transmembrane region" description="Helical" evidence="2">
    <location>
        <begin position="1299"/>
        <end position="1319"/>
    </location>
</feature>
<feature type="region of interest" description="Disordered" evidence="3">
    <location>
        <begin position="1"/>
        <end position="37"/>
    </location>
</feature>
<feature type="region of interest" description="Disordered" evidence="3">
    <location>
        <begin position="378"/>
        <end position="402"/>
    </location>
</feature>
<feature type="region of interest" description="Disordered" evidence="3">
    <location>
        <begin position="875"/>
        <end position="919"/>
    </location>
</feature>
<feature type="region of interest" description="Disordered" evidence="3">
    <location>
        <begin position="1373"/>
        <end position="1463"/>
    </location>
</feature>
<feature type="region of interest" description="Disordered" evidence="3">
    <location>
        <begin position="1702"/>
        <end position="1740"/>
    </location>
</feature>
<feature type="region of interest" description="Disordered" evidence="3">
    <location>
        <begin position="1837"/>
        <end position="1923"/>
    </location>
</feature>
<feature type="compositionally biased region" description="Basic residues" evidence="3">
    <location>
        <begin position="1"/>
        <end position="10"/>
    </location>
</feature>
<feature type="compositionally biased region" description="Polar residues" evidence="3">
    <location>
        <begin position="378"/>
        <end position="398"/>
    </location>
</feature>
<feature type="compositionally biased region" description="Low complexity" evidence="3">
    <location>
        <begin position="879"/>
        <end position="894"/>
    </location>
</feature>
<feature type="compositionally biased region" description="Low complexity" evidence="3">
    <location>
        <begin position="904"/>
        <end position="915"/>
    </location>
</feature>
<feature type="compositionally biased region" description="Polar residues" evidence="3">
    <location>
        <begin position="1454"/>
        <end position="1463"/>
    </location>
</feature>
<feature type="compositionally biased region" description="Polar residues" evidence="3">
    <location>
        <begin position="1911"/>
        <end position="1923"/>
    </location>
</feature>
<feature type="site" description="Breakpoint for translocation to form KIAA1549-BRAF fusion protein">
    <location>
        <begin position="1643"/>
        <end position="1644"/>
    </location>
</feature>
<feature type="site" description="Breakpoint for translocation to form KIAA1549-BRAF fusion protein">
    <location>
        <begin position="1749"/>
        <end position="1750"/>
    </location>
</feature>
<feature type="modified residue" description="Phosphoserine" evidence="1">
    <location>
        <position position="1388"/>
    </location>
</feature>
<feature type="modified residue" description="Phosphoserine" evidence="13">
    <location>
        <position position="1395"/>
    </location>
</feature>
<feature type="modified residue" description="Phosphoserine" evidence="1">
    <location>
        <position position="1554"/>
    </location>
</feature>
<feature type="modified residue" description="Phosphoserine" evidence="1">
    <location>
        <position position="1555"/>
    </location>
</feature>
<feature type="modified residue" description="Phosphothreonine" evidence="1">
    <location>
        <position position="1622"/>
    </location>
</feature>
<feature type="modified residue" description="Phosphoserine" evidence="1">
    <location>
        <position position="1624"/>
    </location>
</feature>
<feature type="splice variant" id="VSP_040885" description="In isoform 3 and isoform 4." evidence="10">
    <location>
        <begin position="1"/>
        <end position="1216"/>
    </location>
</feature>
<feature type="splice variant" id="VSP_040886" description="In isoform 3 and isoform 4." evidence="10">
    <original>AGNSVV</original>
    <variation>MVSAIF</variation>
    <location>
        <begin position="1217"/>
        <end position="1222"/>
    </location>
</feature>
<feature type="splice variant" id="VSP_034448" description="In isoform 2 and isoform 3." evidence="8 9 10">
    <location>
        <begin position="1867"/>
        <end position="1882"/>
    </location>
</feature>
<feature type="sequence variant" id="VAR_044187" description="In dbSNP:rs2718131.">
    <original>A</original>
    <variation>P</variation>
    <location>
        <position position="448"/>
    </location>
</feature>
<feature type="sequence variant" id="VAR_057812" description="In dbSNP:rs2774960." evidence="4">
    <original>P</original>
    <variation>L</variation>
    <location>
        <position position="652"/>
    </location>
</feature>
<feature type="sequence variant" id="VAR_044188" description="In dbSNP:rs2354336.">
    <original>V</original>
    <variation>G</variation>
    <location>
        <position position="851"/>
    </location>
</feature>
<feature type="sequence variant" id="VAR_083316" description="In RP86; uncertain significance; dbSNP:rs776206391." evidence="7">
    <original>H</original>
    <variation>Q</variation>
    <location>
        <position position="1562"/>
    </location>
</feature>
<feature type="sequence conflict" description="In Ref. 3; BAB13375." evidence="11" ref="3">
    <original>P</original>
    <variation>A</variation>
    <location>
        <position position="486"/>
    </location>
</feature>
<feature type="sequence conflict" description="In Ref. 3; BAB13375." evidence="11" ref="3">
    <original>R</original>
    <variation>G</variation>
    <location>
        <position position="617"/>
    </location>
</feature>
<feature type="sequence conflict" description="In Ref. 3; BAB13375." evidence="11" ref="3">
    <original>S</original>
    <variation>L</variation>
    <location>
        <position position="849"/>
    </location>
</feature>
<proteinExistence type="evidence at protein level"/>
<reference key="1">
    <citation type="journal article" date="2008" name="Cancer Res.">
        <title>Tandem duplication producing a novel oncogenic BRAF fusion gene defines the majority of pilocytic astrocytomas.</title>
        <authorList>
            <person name="Jones D.T.W."/>
            <person name="Kocialkowski S."/>
            <person name="Liu L."/>
            <person name="Pearson D.M."/>
            <person name="Backlund L.M."/>
            <person name="Ichimura K."/>
            <person name="Collins V.P."/>
        </authorList>
    </citation>
    <scope>NUCLEOTIDE SEQUENCE [GENOMIC DNA / MRNA] (ISOFORMS 1; 2; 3 AND 4)</scope>
    <scope>DISEASE</scope>
    <scope>CHROMOSOMAL REARRANGEMENT</scope>
    <source>
        <tissue>Brain</tissue>
    </source>
</reference>
<reference key="2">
    <citation type="journal article" date="2003" name="Nature">
        <title>The DNA sequence of human chromosome 7.</title>
        <authorList>
            <person name="Hillier L.W."/>
            <person name="Fulton R.S."/>
            <person name="Fulton L.A."/>
            <person name="Graves T.A."/>
            <person name="Pepin K.H."/>
            <person name="Wagner-McPherson C."/>
            <person name="Layman D."/>
            <person name="Maas J."/>
            <person name="Jaeger S."/>
            <person name="Walker R."/>
            <person name="Wylie K."/>
            <person name="Sekhon M."/>
            <person name="Becker M.C."/>
            <person name="O'Laughlin M.D."/>
            <person name="Schaller M.E."/>
            <person name="Fewell G.A."/>
            <person name="Delehaunty K.D."/>
            <person name="Miner T.L."/>
            <person name="Nash W.E."/>
            <person name="Cordes M."/>
            <person name="Du H."/>
            <person name="Sun H."/>
            <person name="Edwards J."/>
            <person name="Bradshaw-Cordum H."/>
            <person name="Ali J."/>
            <person name="Andrews S."/>
            <person name="Isak A."/>
            <person name="Vanbrunt A."/>
            <person name="Nguyen C."/>
            <person name="Du F."/>
            <person name="Lamar B."/>
            <person name="Courtney L."/>
            <person name="Kalicki J."/>
            <person name="Ozersky P."/>
            <person name="Bielicki L."/>
            <person name="Scott K."/>
            <person name="Holmes A."/>
            <person name="Harkins R."/>
            <person name="Harris A."/>
            <person name="Strong C.M."/>
            <person name="Hou S."/>
            <person name="Tomlinson C."/>
            <person name="Dauphin-Kohlberg S."/>
            <person name="Kozlowicz-Reilly A."/>
            <person name="Leonard S."/>
            <person name="Rohlfing T."/>
            <person name="Rock S.M."/>
            <person name="Tin-Wollam A.-M."/>
            <person name="Abbott A."/>
            <person name="Minx P."/>
            <person name="Maupin R."/>
            <person name="Strowmatt C."/>
            <person name="Latreille P."/>
            <person name="Miller N."/>
            <person name="Johnson D."/>
            <person name="Murray J."/>
            <person name="Woessner J.P."/>
            <person name="Wendl M.C."/>
            <person name="Yang S.-P."/>
            <person name="Schultz B.R."/>
            <person name="Wallis J.W."/>
            <person name="Spieth J."/>
            <person name="Bieri T.A."/>
            <person name="Nelson J.O."/>
            <person name="Berkowicz N."/>
            <person name="Wohldmann P.E."/>
            <person name="Cook L.L."/>
            <person name="Hickenbotham M.T."/>
            <person name="Eldred J."/>
            <person name="Williams D."/>
            <person name="Bedell J.A."/>
            <person name="Mardis E.R."/>
            <person name="Clifton S.W."/>
            <person name="Chissoe S.L."/>
            <person name="Marra M.A."/>
            <person name="Raymond C."/>
            <person name="Haugen E."/>
            <person name="Gillett W."/>
            <person name="Zhou Y."/>
            <person name="James R."/>
            <person name="Phelps K."/>
            <person name="Iadanoto S."/>
            <person name="Bubb K."/>
            <person name="Simms E."/>
            <person name="Levy R."/>
            <person name="Clendenning J."/>
            <person name="Kaul R."/>
            <person name="Kent W.J."/>
            <person name="Furey T.S."/>
            <person name="Baertsch R.A."/>
            <person name="Brent M.R."/>
            <person name="Keibler E."/>
            <person name="Flicek P."/>
            <person name="Bork P."/>
            <person name="Suyama M."/>
            <person name="Bailey J.A."/>
            <person name="Portnoy M.E."/>
            <person name="Torrents D."/>
            <person name="Chinwalla A.T."/>
            <person name="Gish W.R."/>
            <person name="Eddy S.R."/>
            <person name="McPherson J.D."/>
            <person name="Olson M.V."/>
            <person name="Eichler E.E."/>
            <person name="Green E.D."/>
            <person name="Waterston R.H."/>
            <person name="Wilson R.K."/>
        </authorList>
    </citation>
    <scope>NUCLEOTIDE SEQUENCE [LARGE SCALE GENOMIC DNA]</scope>
</reference>
<reference key="3">
    <citation type="journal article" date="2000" name="DNA Res.">
        <title>Prediction of the coding sequences of unidentified human genes. XVIII. The complete sequences of 100 new cDNA clones from brain which code for large proteins in vitro.</title>
        <authorList>
            <person name="Nagase T."/>
            <person name="Kikuno R."/>
            <person name="Nakayama M."/>
            <person name="Hirosawa M."/>
            <person name="Ohara O."/>
        </authorList>
    </citation>
    <scope>NUCLEOTIDE SEQUENCE [LARGE SCALE MRNA] OF 70-1950 (ISOFORM 2)</scope>
    <scope>VARIANT LEU-652</scope>
    <source>
        <tissue>Brain</tissue>
    </source>
</reference>
<reference key="4">
    <citation type="journal article" date="2004" name="Genome Res.">
        <title>The status, quality, and expansion of the NIH full-length cDNA project: the Mammalian Gene Collection (MGC).</title>
        <authorList>
            <consortium name="The MGC Project Team"/>
        </authorList>
    </citation>
    <scope>NUCLEOTIDE SEQUENCE [LARGE SCALE MRNA] OF 1128-1950 (ISOFORM 1)</scope>
    <source>
        <tissue>Brain</tissue>
        <tissue>Duodenum</tissue>
    </source>
</reference>
<reference key="5">
    <citation type="journal article" date="2001" name="Genome Res.">
        <title>Towards a catalog of human genes and proteins: sequencing and analysis of 500 novel complete protein coding human cDNAs.</title>
        <authorList>
            <person name="Wiemann S."/>
            <person name="Weil B."/>
            <person name="Wellenreuther R."/>
            <person name="Gassenhuber J."/>
            <person name="Glassl S."/>
            <person name="Ansorge W."/>
            <person name="Boecher M."/>
            <person name="Bloecker H."/>
            <person name="Bauersachs S."/>
            <person name="Blum H."/>
            <person name="Lauber J."/>
            <person name="Duesterhoeft A."/>
            <person name="Beyer A."/>
            <person name="Koehrer K."/>
            <person name="Strack N."/>
            <person name="Mewes H.-W."/>
            <person name="Ottenwaelder B."/>
            <person name="Obermaier B."/>
            <person name="Tampe J."/>
            <person name="Heubner D."/>
            <person name="Wambutt R."/>
            <person name="Korn B."/>
            <person name="Klein M."/>
            <person name="Poustka A."/>
        </authorList>
    </citation>
    <scope>NUCLEOTIDE SEQUENCE [LARGE SCALE MRNA] OF 1811-1950 (ISOFORM 2)</scope>
    <source>
        <tissue>Testis</tissue>
    </source>
</reference>
<reference key="6">
    <citation type="journal article" date="2006" name="Cell">
        <title>Global, in vivo, and site-specific phosphorylation dynamics in signaling networks.</title>
        <authorList>
            <person name="Olsen J.V."/>
            <person name="Blagoev B."/>
            <person name="Gnad F."/>
            <person name="Macek B."/>
            <person name="Kumar C."/>
            <person name="Mortensen P."/>
            <person name="Mann M."/>
        </authorList>
    </citation>
    <scope>PHOSPHORYLATION [LARGE SCALE ANALYSIS] AT SER-1395</scope>
    <scope>IDENTIFICATION BY MASS SPECTROMETRY [LARGE SCALE ANALYSIS]</scope>
    <source>
        <tissue>Cervix carcinoma</tissue>
    </source>
</reference>
<reference key="7">
    <citation type="journal article" date="2017" name="J. Biol. Chem.">
        <title>Mammalian O-mannosylation of cadherins and plexins is independent of protein O-mannosyltransferases 1 and 2.</title>
        <authorList>
            <person name="Larsen I.S.B."/>
            <person name="Narimatsu Y."/>
            <person name="Joshi H.J."/>
            <person name="Yang Z."/>
            <person name="Harrison O.J."/>
            <person name="Brasch J."/>
            <person name="Shapiro L."/>
            <person name="Honig B."/>
            <person name="Vakhrushev S.Y."/>
            <person name="Clausen H."/>
            <person name="Halim A."/>
        </authorList>
    </citation>
    <scope>GLYCOSYLATION</scope>
</reference>
<reference key="8">
    <citation type="journal article" date="2018" name="J. Med. Genet.">
        <title>Homozygous variants in KIAA1549, encoding a ciliary protein, are associated with autosomal recessive retinitis pigmentosa.</title>
        <authorList>
            <person name="de Bruijn S.E."/>
            <person name="Verbakel S.K."/>
            <person name="de Vrieze E."/>
            <person name="Kremer H."/>
            <person name="Cremers F.P.M."/>
            <person name="Hoyng C.B."/>
            <person name="van den Born L.I."/>
            <person name="Roosing S."/>
        </authorList>
    </citation>
    <scope>INVOLVEMENT IN RP86</scope>
    <scope>FUNCTION</scope>
    <scope>ALTERNATIVE SPLICING</scope>
    <scope>TISSUE SPECIFICITY</scope>
    <scope>VARIANT RP86 GLN-1562</scope>
</reference>
<keyword id="KW-0877">Alternative promoter usage</keyword>
<keyword id="KW-0025">Alternative splicing</keyword>
<keyword id="KW-0966">Cell projection</keyword>
<keyword id="KW-0160">Chromosomal rearrangement</keyword>
<keyword id="KW-0472">Membrane</keyword>
<keyword id="KW-0597">Phosphoprotein</keyword>
<keyword id="KW-1267">Proteomics identification</keyword>
<keyword id="KW-1185">Reference proteome</keyword>
<keyword id="KW-0682">Retinitis pigmentosa</keyword>
<keyword id="KW-0812">Transmembrane</keyword>
<keyword id="KW-1133">Transmembrane helix</keyword>
<organism>
    <name type="scientific">Homo sapiens</name>
    <name type="common">Human</name>
    <dbReference type="NCBI Taxonomy" id="9606"/>
    <lineage>
        <taxon>Eukaryota</taxon>
        <taxon>Metazoa</taxon>
        <taxon>Chordata</taxon>
        <taxon>Craniata</taxon>
        <taxon>Vertebrata</taxon>
        <taxon>Euteleostomi</taxon>
        <taxon>Mammalia</taxon>
        <taxon>Eutheria</taxon>
        <taxon>Euarchontoglires</taxon>
        <taxon>Primates</taxon>
        <taxon>Haplorrhini</taxon>
        <taxon>Catarrhini</taxon>
        <taxon>Hominidae</taxon>
        <taxon>Homo</taxon>
    </lineage>
</organism>
<protein>
    <recommendedName>
        <fullName>UPF0606 protein KIAA1549</fullName>
    </recommendedName>
</protein>
<name>K1549_HUMAN</name>
<sequence>MPGARRRRRGAAMEGKPRAGVALAPGPSGRRPSARCARRRRPGLLLPGLWLLLLARPASCAPDELSPEQHNLSLYSMELVLKKSTGHSAAQVALTETAPGSQHSSPLHVTAPPSATTFDTAFFNQGKQTKSTADPSIFVATYVSVTSKEVAVNDDEMDNFLPDTHWTTPRMVSPIQYITVSPPGLPREALEPMLTPSLPMVSLQDEEVTSGWQNTTRQPAAYAESASHFHTFRSAFRTSEGIVPTPGRNLVLYPTDAYSHLSSRTLPEIVASLTEGVETTLFLSSRSLMPQPLGDGITIPLPSLGEVSQPPEEVWATSADRYTDVTTVLSQSLEETISPRTYPTVTASHAALAFSRTHSPLLSTPLAFASSASPTDVSSNPFLPSDSSKTSELHSNSALPGPVDNTHILSPVSSFRPYTWCAACTVPSPQQVLATSLMEKDVGSGDGAETLCMTVLEESSISLMSSVVADFSEFEEDPQVFNTLFPSRPIVPLSSRSMEISETSVGISAEVDMSSVTTTQVPPAHGRLSVPASLDPTAGSLSVAETQVTPSSVTTAFFSVITSILLDSSFSVIANKNTPSLAVRDPSVFTPYSLVPSVESSLFSDQERSSFSEHKPRGALDFASSFFSTPPLELSGSISSPSEAPASLSLMPSDLSPFTSQSFSPLVETFTLFDSSDLQSSQLSLPSSTNLEFSQLQPSSELPLNTIMLLPSRSEVSPWSSFPSDSLEFVEASTVSLTDSEAHFTSAFIETTSYLESSLISHESAVTALVPPGSESFDILTAGIQATSPLTTVHTTPILTESSLFSTLTPPDDQISALDGHVSVLASFSKAIPTGTVLITDAYLPSGSSFVSEATPFPLPTELTVVGPSLTPTEVPLNTSTEVSTTSTGAATGGPLDSTLMGDAASQSPPESSAAPPLPSLRPVTAFTLEATVDTPTLATAKPPYVCDITVPDAYLITTVLARRAVQEYIITAIKEVLRIHFNRAVELKVYELFTDFTFLVTSGPFVYTAISVINVLINSKLVRDQTPLILSVKPSFLVPESRFQVQTVLQFVPPSVDTGFCNFTQRIEKGLMTALFEVRKHHQGTYNLTVQILNITISSSRVTPRRGPVNIIFAVKSTQGFLNGSEVSELLRNLSVVEFSFYLGYPVLQIAEPFQYPQLNLSQLLKSSWVRTVLLGVMEKQLQNEVFQAEMERKLAQLLSEVSTRRRMWRRATVAAGNSVVQVVNVSRLEGDDNPVQLIYFVEDQDGERLSAVKSSDLINKMDLQRAAIILGYRIQGVIAQPVDRVKRPSPESQSNNLWVIVGVVIPVLVVMVIVVILYWKLCRTDKLDFQPDTVANIQQRQKLQIPSVKGFDFAKQHLGQHNKDDILIIHEPAPLPGPLKDHTTPSENGDVPSPKSKIPSKNVRHRGRVSPSDADSTVSEESSERDAGDKTPGAVNDGRSHRAPQSGPPLPSSGNEQHSSASIFEHVDRISRPPEASRRVPSKIQLIAMQPIPAPPVQRPSPADRVAESNKINKEIQTALRHKSEIEHHRNKIRLRAKRRGHYEFPVVDDLSSGDTKERHRVYRRAQMQIDKILDPTASVPSVFIEPRKSSRIKRSPKPRRKHQVNGCPADAEKDRLITTDSDGTYRRPPGVHNSAYIGCPSDPDLPADVQTPSSVELGRYPALPFPASQYIPPQPSIEEARQTMHSLLDDAFALVAPSSQPASTAGVGPGVPPGLPANSTPSQEERRATQWGSFYSPAQTANNPCSRYEDYGMTPPTGPLPRPGFGPGLLQSTELVPPDPQQPQASAEAPFAARGIYSEEMPSVARPRPVGGTTGSQIQHLTQVGIASRIGAQPVEIPPSRGSQYGGPGWPSYGEDEAGRREATHMLGHQEYSSSPLFQVPRTSGREPSAPSGNLPHRGLQGPGLGYPTSSTEDLQPGHSSASLIKAIREELLRLSQKQSTVQNFHS</sequence>
<evidence type="ECO:0000250" key="1">
    <source>
        <dbReference type="UniProtKB" id="Q68FD9"/>
    </source>
</evidence>
<evidence type="ECO:0000255" key="2"/>
<evidence type="ECO:0000256" key="3">
    <source>
        <dbReference type="SAM" id="MobiDB-lite"/>
    </source>
</evidence>
<evidence type="ECO:0000269" key="4">
    <source>
    </source>
</evidence>
<evidence type="ECO:0000269" key="5">
    <source>
    </source>
</evidence>
<evidence type="ECO:0000269" key="6">
    <source>
    </source>
</evidence>
<evidence type="ECO:0000269" key="7">
    <source>
    </source>
</evidence>
<evidence type="ECO:0000303" key="8">
    <source>
    </source>
</evidence>
<evidence type="ECO:0000303" key="9">
    <source>
    </source>
</evidence>
<evidence type="ECO:0000303" key="10">
    <source>
    </source>
</evidence>
<evidence type="ECO:0000305" key="11"/>
<evidence type="ECO:0000312" key="12">
    <source>
        <dbReference type="HGNC" id="HGNC:22219"/>
    </source>
</evidence>
<evidence type="ECO:0007744" key="13">
    <source>
    </source>
</evidence>
<dbReference type="EMBL" id="AM989467">
    <property type="protein sequence ID" value="CAQ43105.1"/>
    <property type="molecule type" value="Genomic_DNA"/>
</dbReference>
<dbReference type="EMBL" id="AM989467">
    <property type="protein sequence ID" value="CAQ43106.1"/>
    <property type="molecule type" value="Genomic_DNA"/>
</dbReference>
<dbReference type="EMBL" id="AM989468">
    <property type="protein sequence ID" value="CAQ43107.1"/>
    <property type="molecule type" value="mRNA"/>
</dbReference>
<dbReference type="EMBL" id="AM989469">
    <property type="protein sequence ID" value="CAQ43108.1"/>
    <property type="molecule type" value="mRNA"/>
</dbReference>
<dbReference type="EMBL" id="AM989470">
    <property type="protein sequence ID" value="CAQ43109.1"/>
    <property type="molecule type" value="mRNA"/>
</dbReference>
<dbReference type="EMBL" id="AM989471">
    <property type="protein sequence ID" value="CAQ43110.1"/>
    <property type="molecule type" value="mRNA"/>
</dbReference>
<dbReference type="EMBL" id="AM989472">
    <property type="protein sequence ID" value="CAQ43111.1"/>
    <property type="status" value="ALT_TERM"/>
    <property type="molecule type" value="mRNA"/>
</dbReference>
<dbReference type="EMBL" id="AM989473">
    <property type="protein sequence ID" value="CAQ43112.1"/>
    <property type="status" value="ALT_TERM"/>
    <property type="molecule type" value="mRNA"/>
</dbReference>
<dbReference type="EMBL" id="AM989474">
    <property type="protein sequence ID" value="CAQ43113.1"/>
    <property type="status" value="ALT_TERM"/>
    <property type="molecule type" value="mRNA"/>
</dbReference>
<dbReference type="EMBL" id="AM989475">
    <property type="protein sequence ID" value="CAQ43114.1"/>
    <property type="status" value="ALT_TERM"/>
    <property type="molecule type" value="mRNA"/>
</dbReference>
<dbReference type="EMBL" id="AM989476">
    <property type="protein sequence ID" value="CAQ43115.1"/>
    <property type="status" value="ALT_TERM"/>
    <property type="molecule type" value="mRNA"/>
</dbReference>
<dbReference type="EMBL" id="AM989477">
    <property type="protein sequence ID" value="CAQ43116.1"/>
    <property type="status" value="ALT_TERM"/>
    <property type="molecule type" value="mRNA"/>
</dbReference>
<dbReference type="EMBL" id="AC018663">
    <property type="status" value="NOT_ANNOTATED_CDS"/>
    <property type="molecule type" value="Genomic_DNA"/>
</dbReference>
<dbReference type="EMBL" id="AC083868">
    <property type="status" value="NOT_ANNOTATED_CDS"/>
    <property type="molecule type" value="Genomic_DNA"/>
</dbReference>
<dbReference type="EMBL" id="AC093144">
    <property type="status" value="NOT_ANNOTATED_CDS"/>
    <property type="molecule type" value="Genomic_DNA"/>
</dbReference>
<dbReference type="EMBL" id="AB046769">
    <property type="protein sequence ID" value="BAB13375.2"/>
    <property type="molecule type" value="mRNA"/>
</dbReference>
<dbReference type="EMBL" id="BC038232">
    <property type="protein sequence ID" value="AAH38232.1"/>
    <property type="status" value="ALT_INIT"/>
    <property type="molecule type" value="mRNA"/>
</dbReference>
<dbReference type="EMBL" id="BC091523">
    <property type="protein sequence ID" value="AAH91523.1"/>
    <property type="molecule type" value="mRNA"/>
</dbReference>
<dbReference type="EMBL" id="AL136736">
    <property type="protein sequence ID" value="CAB66670.2"/>
    <property type="molecule type" value="mRNA"/>
</dbReference>
<dbReference type="CCDS" id="CCDS47723.2">
    <molecule id="Q9HCM3-2"/>
</dbReference>
<dbReference type="CCDS" id="CCDS56513.1">
    <molecule id="Q9HCM3-1"/>
</dbReference>
<dbReference type="RefSeq" id="NP_001158137.1">
    <molecule id="Q9HCM3-1"/>
    <property type="nucleotide sequence ID" value="NM_001164665.2"/>
</dbReference>
<dbReference type="RefSeq" id="NP_065961.2">
    <molecule id="Q9HCM3-2"/>
    <property type="nucleotide sequence ID" value="NM_020910.3"/>
</dbReference>
<dbReference type="SMR" id="Q9HCM3"/>
<dbReference type="BioGRID" id="121702">
    <property type="interactions" value="86"/>
</dbReference>
<dbReference type="FunCoup" id="Q9HCM3">
    <property type="interactions" value="678"/>
</dbReference>
<dbReference type="IntAct" id="Q9HCM3">
    <property type="interactions" value="40"/>
</dbReference>
<dbReference type="MINT" id="Q9HCM3"/>
<dbReference type="STRING" id="9606.ENSP00000416040"/>
<dbReference type="GlyGen" id="Q9HCM3">
    <property type="glycosylation" value="13 sites, 2 N-linked glycans (2 sites), 1 O-linked glycan (9 sites)"/>
</dbReference>
<dbReference type="iPTMnet" id="Q9HCM3"/>
<dbReference type="PhosphoSitePlus" id="Q9HCM3"/>
<dbReference type="SwissPalm" id="Q9HCM3"/>
<dbReference type="BioMuta" id="KIAA1549"/>
<dbReference type="DMDM" id="327478603"/>
<dbReference type="jPOST" id="Q9HCM3"/>
<dbReference type="MassIVE" id="Q9HCM3"/>
<dbReference type="PaxDb" id="9606-ENSP00000416040"/>
<dbReference type="PeptideAtlas" id="Q9HCM3"/>
<dbReference type="ProteomicsDB" id="81759">
    <molecule id="Q9HCM3-1"/>
</dbReference>
<dbReference type="ProteomicsDB" id="81760">
    <molecule id="Q9HCM3-2"/>
</dbReference>
<dbReference type="ProteomicsDB" id="81761">
    <molecule id="Q9HCM3-3"/>
</dbReference>
<dbReference type="ProteomicsDB" id="81762">
    <molecule id="Q9HCM3-4"/>
</dbReference>
<dbReference type="Pumba" id="Q9HCM3"/>
<dbReference type="Antibodypedia" id="9863">
    <property type="antibodies" value="24 antibodies from 11 providers"/>
</dbReference>
<dbReference type="DNASU" id="57670"/>
<dbReference type="Ensembl" id="ENST00000422774.2">
    <molecule id="Q9HCM3-1"/>
    <property type="protein sequence ID" value="ENSP00000416040.2"/>
    <property type="gene ID" value="ENSG00000122778.10"/>
</dbReference>
<dbReference type="Ensembl" id="ENST00000440172.5">
    <molecule id="Q9HCM3-2"/>
    <property type="protein sequence ID" value="ENSP00000406661.1"/>
    <property type="gene ID" value="ENSG00000122778.10"/>
</dbReference>
<dbReference type="GeneID" id="57670"/>
<dbReference type="KEGG" id="hsa:57670"/>
<dbReference type="MANE-Select" id="ENST00000422774.2">
    <property type="protein sequence ID" value="ENSP00000416040.2"/>
    <property type="RefSeq nucleotide sequence ID" value="NM_001164665.2"/>
    <property type="RefSeq protein sequence ID" value="NP_001158137.1"/>
</dbReference>
<dbReference type="UCSC" id="uc011kqj.3">
    <molecule id="Q9HCM3-1"/>
    <property type="organism name" value="human"/>
</dbReference>
<dbReference type="AGR" id="HGNC:22219"/>
<dbReference type="CTD" id="57670"/>
<dbReference type="DisGeNET" id="57670"/>
<dbReference type="GeneCards" id="KIAA1549"/>
<dbReference type="HGNC" id="HGNC:22219">
    <property type="gene designation" value="KIAA1549"/>
</dbReference>
<dbReference type="HPA" id="ENSG00000122778">
    <property type="expression patterns" value="Low tissue specificity"/>
</dbReference>
<dbReference type="MalaCards" id="KIAA1549"/>
<dbReference type="MIM" id="613344">
    <property type="type" value="gene"/>
</dbReference>
<dbReference type="MIM" id="618613">
    <property type="type" value="phenotype"/>
</dbReference>
<dbReference type="neXtProt" id="NX_Q9HCM3"/>
<dbReference type="OpenTargets" id="ENSG00000122778"/>
<dbReference type="Orphanet" id="251615">
    <property type="disease" value="Pilomyxoid astrocytoma"/>
</dbReference>
<dbReference type="Orphanet" id="791">
    <property type="disease" value="Retinitis pigmentosa"/>
</dbReference>
<dbReference type="PharmGKB" id="PA162393138"/>
<dbReference type="VEuPathDB" id="HostDB:ENSG00000122778"/>
<dbReference type="eggNOG" id="ENOG502QT4E">
    <property type="taxonomic scope" value="Eukaryota"/>
</dbReference>
<dbReference type="GeneTree" id="ENSGT00530000063472"/>
<dbReference type="HOGENOM" id="CLU_002218_0_0_1"/>
<dbReference type="InParanoid" id="Q9HCM3"/>
<dbReference type="OMA" id="YTWCASC"/>
<dbReference type="OrthoDB" id="10064192at2759"/>
<dbReference type="PAN-GO" id="Q9HCM3">
    <property type="GO annotations" value="0 GO annotations based on evolutionary models"/>
</dbReference>
<dbReference type="PhylomeDB" id="Q9HCM3"/>
<dbReference type="TreeFam" id="TF332690"/>
<dbReference type="PathwayCommons" id="Q9HCM3"/>
<dbReference type="Reactome" id="R-HSA-6802952">
    <property type="pathway name" value="Signaling by BRAF and RAF1 fusions"/>
</dbReference>
<dbReference type="SignaLink" id="Q9HCM3"/>
<dbReference type="BioGRID-ORCS" id="57670">
    <property type="hits" value="5 hits in 1068 CRISPR screens"/>
</dbReference>
<dbReference type="CD-CODE" id="FB4E32DD">
    <property type="entry name" value="Presynaptic clusters and postsynaptic densities"/>
</dbReference>
<dbReference type="ChiTaRS" id="KIAA1549">
    <property type="organism name" value="human"/>
</dbReference>
<dbReference type="GenomeRNAi" id="57670"/>
<dbReference type="Pharos" id="Q9HCM3">
    <property type="development level" value="Tbio"/>
</dbReference>
<dbReference type="PRO" id="PR:Q9HCM3"/>
<dbReference type="Proteomes" id="UP000005640">
    <property type="component" value="Chromosome 7"/>
</dbReference>
<dbReference type="RNAct" id="Q9HCM3">
    <property type="molecule type" value="protein"/>
</dbReference>
<dbReference type="Bgee" id="ENSG00000122778">
    <property type="expression patterns" value="Expressed in cortical plate and 151 other cell types or tissues"/>
</dbReference>
<dbReference type="GO" id="GO:0032391">
    <property type="term" value="C:photoreceptor connecting cilium"/>
    <property type="evidence" value="ECO:0000250"/>
    <property type="project" value="UniProtKB"/>
</dbReference>
<dbReference type="GO" id="GO:0005886">
    <property type="term" value="C:plasma membrane"/>
    <property type="evidence" value="ECO:0000304"/>
    <property type="project" value="Reactome"/>
</dbReference>
<dbReference type="InterPro" id="IPR024606">
    <property type="entry name" value="KIAA1549"/>
</dbReference>
<dbReference type="PANTHER" id="PTHR21590">
    <property type="entry name" value="SEA DOMAIN-CONTAINING PROTEIN"/>
    <property type="match status" value="1"/>
</dbReference>
<dbReference type="PANTHER" id="PTHR21590:SF4">
    <property type="entry name" value="UPF0606 PROTEIN KIAA1549"/>
    <property type="match status" value="1"/>
</dbReference>
<dbReference type="Pfam" id="PF12877">
    <property type="entry name" value="KIAA1549"/>
    <property type="match status" value="1"/>
</dbReference>
<gene>
    <name evidence="12" type="primary">KIAA1549</name>
</gene>
<comment type="function">
    <text evidence="7">May play a role in photoreceptor function.</text>
</comment>
<comment type="interaction">
    <interactant intactId="EBI-311350">
        <id>Q9HCM3</id>
    </interactant>
    <interactant intactId="EBI-1038838">
        <id>Q13936</id>
        <label>CACNA1C</label>
    </interactant>
    <organismsDiffer>false</organismsDiffer>
    <experiments>2</experiments>
</comment>
<comment type="subcellular location">
    <subcellularLocation>
        <location evidence="11">Membrane</location>
        <topology evidence="11">Multi-pass membrane protein</topology>
    </subcellularLocation>
    <subcellularLocation>
        <location evidence="1">Cell projection</location>
        <location evidence="1">Cilium</location>
    </subcellularLocation>
    <text evidence="1">In the retinal photoreceptor cells, localizes at the connecting cilium, a thin bridge linking the cell body and the light-sensing outer segment.</text>
</comment>
<comment type="alternative products">
    <event type="alternative promoter"/>
    <event type="alternative splicing"/>
    <isoform>
        <id>Q9HCM3-1</id>
        <name>1</name>
        <name>v2 long-form</name>
        <sequence type="displayed"/>
    </isoform>
    <isoform>
        <id>Q9HCM3-2</id>
        <name>2</name>
        <name>v1 long-form</name>
        <sequence type="described" ref="VSP_034448"/>
    </isoform>
    <isoform>
        <id>Q9HCM3-3</id>
        <name>3</name>
        <name>v1 short-form</name>
        <sequence type="described" ref="VSP_040885 VSP_040886 VSP_034448"/>
    </isoform>
    <isoform>
        <id>Q9HCM3-4</id>
        <name>4</name>
        <name>v2 short-form</name>
        <sequence type="described" ref="VSP_040885 VSP_040886"/>
    </isoform>
</comment>
<comment type="tissue specificity">
    <molecule>Isoform 1</molecule>
    <text evidence="7">Expression is low to moderate in retina and tissues, such as heart and kidney, and is predominantly expressed in brain.</text>
</comment>
<comment type="tissue specificity">
    <molecule>Isoform 4</molecule>
    <text evidence="7">Abundantly expressed in the retina, compared with only minimal expression in brain and other tissues.</text>
</comment>
<comment type="PTM">
    <text evidence="6">O-glycosylated. O-mannosylated by POMT1 and POMT2 and elongated by POMGNT1.</text>
</comment>
<comment type="disease" evidence="7">
    <disease id="DI-05674">
        <name>Retinitis pigmentosa 86</name>
        <acronym>RP86</acronym>
        <description>A form of retinitis pigmentosa, a retinal dystrophy belonging to the group of pigmentary retinopathies. Retinitis pigmentosa is characterized by retinal pigment deposits visible on fundus examination and primary loss of rod photoreceptor cells followed by secondary loss of cone photoreceptors. Patients typically have night vision blindness and loss of midperipheral visual field. As their condition progresses, they lose their far peripheral visual field and eventually central vision as well. RP86 is an autosomal recessive form.</description>
        <dbReference type="MIM" id="618613"/>
    </disease>
    <text>The disease is caused by variants affecting the gene represented in this entry.</text>
</comment>
<comment type="disease">
    <text evidence="5">A chromosomal aberration involving KIAA1549 is found in pilocytic astrocytoma. A tandem duplication of 2 Mb at 7q34 leads to the expression of a KIAA1549-BRAF fusion protein with a constitutive kinase activity and inducing cell transformation.</text>
</comment>
<comment type="miscellaneous">
    <molecule>Isoform 3</molecule>
    <text evidence="11">Produced by alternative promoter usage.</text>
</comment>
<comment type="miscellaneous">
    <molecule>Isoform 4</molecule>
    <text evidence="11">Produced by alternative promoter usage.</text>
</comment>
<comment type="similarity">
    <text evidence="11">Belongs to the UPF0606 family.</text>
</comment>
<comment type="sequence caution" evidence="11">
    <conflict type="erroneous initiation">
        <sequence resource="EMBL-CDS" id="AAH38232"/>
    </conflict>
    <text>Extended N-terminus.</text>
</comment>